<accession>B9LZL8</accession>
<comment type="function">
    <text evidence="1">NDH-1 shuttles electrons from NADH, via FMN and iron-sulfur (Fe-S) centers, to quinones in the respiratory chain. The immediate electron acceptor for the enzyme in this species is believed to be ubiquinone. Couples the redox reaction to proton translocation (for every two electrons transferred, four hydrogen ions are translocated across the cytoplasmic membrane), and thus conserves the redox energy in a proton gradient.</text>
</comment>
<comment type="catalytic activity">
    <reaction evidence="1">
        <text>a quinone + NADH + 5 H(+)(in) = a quinol + NAD(+) + 4 H(+)(out)</text>
        <dbReference type="Rhea" id="RHEA:57888"/>
        <dbReference type="ChEBI" id="CHEBI:15378"/>
        <dbReference type="ChEBI" id="CHEBI:24646"/>
        <dbReference type="ChEBI" id="CHEBI:57540"/>
        <dbReference type="ChEBI" id="CHEBI:57945"/>
        <dbReference type="ChEBI" id="CHEBI:132124"/>
    </reaction>
</comment>
<comment type="cofactor">
    <cofactor evidence="1">
        <name>[4Fe-4S] cluster</name>
        <dbReference type="ChEBI" id="CHEBI:49883"/>
    </cofactor>
    <text evidence="1">Binds 1 [4Fe-4S] cluster.</text>
</comment>
<comment type="subunit">
    <text evidence="1">NDH-1 is composed of 14 different subunits. Subunits NuoB, C, D, E, F, and G constitute the peripheral sector of the complex.</text>
</comment>
<comment type="subcellular location">
    <subcellularLocation>
        <location evidence="1">Cell inner membrane</location>
        <topology evidence="1">Peripheral membrane protein</topology>
        <orientation evidence="1">Cytoplasmic side</orientation>
    </subcellularLocation>
</comment>
<comment type="similarity">
    <text evidence="1">Belongs to the complex I 20 kDa subunit family.</text>
</comment>
<proteinExistence type="inferred from homology"/>
<keyword id="KW-0004">4Fe-4S</keyword>
<keyword id="KW-0997">Cell inner membrane</keyword>
<keyword id="KW-1003">Cell membrane</keyword>
<keyword id="KW-0408">Iron</keyword>
<keyword id="KW-0411">Iron-sulfur</keyword>
<keyword id="KW-0472">Membrane</keyword>
<keyword id="KW-0479">Metal-binding</keyword>
<keyword id="KW-0520">NAD</keyword>
<keyword id="KW-0874">Quinone</keyword>
<keyword id="KW-1185">Reference proteome</keyword>
<keyword id="KW-1278">Translocase</keyword>
<keyword id="KW-0813">Transport</keyword>
<keyword id="KW-0830">Ubiquinone</keyword>
<gene>
    <name evidence="1" type="primary">nuoB</name>
    <name type="ordered locus">Geob_0463</name>
</gene>
<protein>
    <recommendedName>
        <fullName evidence="1">NADH-quinone oxidoreductase subunit B</fullName>
        <ecNumber evidence="1">7.1.1.-</ecNumber>
    </recommendedName>
    <alternativeName>
        <fullName evidence="1">NADH dehydrogenase I subunit B</fullName>
    </alternativeName>
    <alternativeName>
        <fullName evidence="1">NDH-1 subunit B</fullName>
    </alternativeName>
</protein>
<sequence>MGVEQPLGDNIVTASLDGLVNWARKTSIWPMTFGLACCAIEMMATGAAKHDLDRFGIIFRASPRQADCIIIAGTVTKKMLPVIKTVYEQMPEPKWVIAMGACACSGGVFDTYSVVQGIDEALPVDVYVPGCPPRPEALLYGIMKLQDKIGKERNSFGSAIGLGDRLEPAA</sequence>
<evidence type="ECO:0000255" key="1">
    <source>
        <dbReference type="HAMAP-Rule" id="MF_01356"/>
    </source>
</evidence>
<organism>
    <name type="scientific">Geotalea daltonii (strain DSM 22248 / JCM 15807 / FRC-32)</name>
    <name type="common">Geobacter daltonii</name>
    <dbReference type="NCBI Taxonomy" id="316067"/>
    <lineage>
        <taxon>Bacteria</taxon>
        <taxon>Pseudomonadati</taxon>
        <taxon>Thermodesulfobacteriota</taxon>
        <taxon>Desulfuromonadia</taxon>
        <taxon>Geobacterales</taxon>
        <taxon>Geobacteraceae</taxon>
        <taxon>Geotalea</taxon>
    </lineage>
</organism>
<reference key="1">
    <citation type="submission" date="2009-01" db="EMBL/GenBank/DDBJ databases">
        <title>Complete sequence of Geobacter sp. FRC-32.</title>
        <authorList>
            <consortium name="US DOE Joint Genome Institute"/>
            <person name="Lucas S."/>
            <person name="Copeland A."/>
            <person name="Lapidus A."/>
            <person name="Glavina del Rio T."/>
            <person name="Dalin E."/>
            <person name="Tice H."/>
            <person name="Bruce D."/>
            <person name="Goodwin L."/>
            <person name="Pitluck S."/>
            <person name="Saunders E."/>
            <person name="Brettin T."/>
            <person name="Detter J.C."/>
            <person name="Han C."/>
            <person name="Larimer F."/>
            <person name="Land M."/>
            <person name="Hauser L."/>
            <person name="Kyrpides N."/>
            <person name="Ovchinnikova G."/>
            <person name="Kostka J."/>
            <person name="Richardson P."/>
        </authorList>
    </citation>
    <scope>NUCLEOTIDE SEQUENCE [LARGE SCALE GENOMIC DNA]</scope>
    <source>
        <strain>DSM 22248 / JCM 15807 / FRC-32</strain>
    </source>
</reference>
<name>NUOB_GEODF</name>
<feature type="chain" id="PRO_0000376241" description="NADH-quinone oxidoreductase subunit B">
    <location>
        <begin position="1"/>
        <end position="170"/>
    </location>
</feature>
<feature type="binding site" evidence="1">
    <location>
        <position position="37"/>
    </location>
    <ligand>
        <name>[4Fe-4S] cluster</name>
        <dbReference type="ChEBI" id="CHEBI:49883"/>
    </ligand>
</feature>
<feature type="binding site" evidence="1">
    <location>
        <position position="38"/>
    </location>
    <ligand>
        <name>[4Fe-4S] cluster</name>
        <dbReference type="ChEBI" id="CHEBI:49883"/>
    </ligand>
</feature>
<feature type="binding site" evidence="1">
    <location>
        <position position="102"/>
    </location>
    <ligand>
        <name>[4Fe-4S] cluster</name>
        <dbReference type="ChEBI" id="CHEBI:49883"/>
    </ligand>
</feature>
<feature type="binding site" evidence="1">
    <location>
        <position position="131"/>
    </location>
    <ligand>
        <name>[4Fe-4S] cluster</name>
        <dbReference type="ChEBI" id="CHEBI:49883"/>
    </ligand>
</feature>
<dbReference type="EC" id="7.1.1.-" evidence="1"/>
<dbReference type="EMBL" id="CP001390">
    <property type="protein sequence ID" value="ACM18832.1"/>
    <property type="molecule type" value="Genomic_DNA"/>
</dbReference>
<dbReference type="RefSeq" id="WP_012645561.1">
    <property type="nucleotide sequence ID" value="NC_011979.1"/>
</dbReference>
<dbReference type="SMR" id="B9LZL8"/>
<dbReference type="STRING" id="316067.Geob_0463"/>
<dbReference type="KEGG" id="geo:Geob_0463"/>
<dbReference type="eggNOG" id="COG0377">
    <property type="taxonomic scope" value="Bacteria"/>
</dbReference>
<dbReference type="HOGENOM" id="CLU_055737_7_3_7"/>
<dbReference type="OrthoDB" id="9786737at2"/>
<dbReference type="Proteomes" id="UP000007721">
    <property type="component" value="Chromosome"/>
</dbReference>
<dbReference type="GO" id="GO:0005886">
    <property type="term" value="C:plasma membrane"/>
    <property type="evidence" value="ECO:0007669"/>
    <property type="project" value="UniProtKB-SubCell"/>
</dbReference>
<dbReference type="GO" id="GO:0045271">
    <property type="term" value="C:respiratory chain complex I"/>
    <property type="evidence" value="ECO:0007669"/>
    <property type="project" value="TreeGrafter"/>
</dbReference>
<dbReference type="GO" id="GO:0051539">
    <property type="term" value="F:4 iron, 4 sulfur cluster binding"/>
    <property type="evidence" value="ECO:0007669"/>
    <property type="project" value="UniProtKB-KW"/>
</dbReference>
<dbReference type="GO" id="GO:0005506">
    <property type="term" value="F:iron ion binding"/>
    <property type="evidence" value="ECO:0007669"/>
    <property type="project" value="UniProtKB-UniRule"/>
</dbReference>
<dbReference type="GO" id="GO:0008137">
    <property type="term" value="F:NADH dehydrogenase (ubiquinone) activity"/>
    <property type="evidence" value="ECO:0007669"/>
    <property type="project" value="InterPro"/>
</dbReference>
<dbReference type="GO" id="GO:0050136">
    <property type="term" value="F:NADH:ubiquinone reductase (non-electrogenic) activity"/>
    <property type="evidence" value="ECO:0007669"/>
    <property type="project" value="UniProtKB-UniRule"/>
</dbReference>
<dbReference type="GO" id="GO:0048038">
    <property type="term" value="F:quinone binding"/>
    <property type="evidence" value="ECO:0007669"/>
    <property type="project" value="UniProtKB-KW"/>
</dbReference>
<dbReference type="GO" id="GO:0009060">
    <property type="term" value="P:aerobic respiration"/>
    <property type="evidence" value="ECO:0007669"/>
    <property type="project" value="TreeGrafter"/>
</dbReference>
<dbReference type="GO" id="GO:0015990">
    <property type="term" value="P:electron transport coupled proton transport"/>
    <property type="evidence" value="ECO:0007669"/>
    <property type="project" value="TreeGrafter"/>
</dbReference>
<dbReference type="FunFam" id="3.40.50.12280:FF:000002">
    <property type="entry name" value="NADH-quinone oxidoreductase subunit B"/>
    <property type="match status" value="1"/>
</dbReference>
<dbReference type="Gene3D" id="3.40.50.12280">
    <property type="match status" value="1"/>
</dbReference>
<dbReference type="HAMAP" id="MF_01356">
    <property type="entry name" value="NDH1_NuoB"/>
    <property type="match status" value="1"/>
</dbReference>
<dbReference type="InterPro" id="IPR006137">
    <property type="entry name" value="NADH_UbQ_OxRdtase-like_20kDa"/>
</dbReference>
<dbReference type="InterPro" id="IPR006138">
    <property type="entry name" value="NADH_UQ_OxRdtase_20Kd_su"/>
</dbReference>
<dbReference type="NCBIfam" id="TIGR01957">
    <property type="entry name" value="nuoB_fam"/>
    <property type="match status" value="1"/>
</dbReference>
<dbReference type="NCBIfam" id="NF005012">
    <property type="entry name" value="PRK06411.1"/>
    <property type="match status" value="1"/>
</dbReference>
<dbReference type="PANTHER" id="PTHR11995">
    <property type="entry name" value="NADH DEHYDROGENASE"/>
    <property type="match status" value="1"/>
</dbReference>
<dbReference type="PANTHER" id="PTHR11995:SF14">
    <property type="entry name" value="NADH DEHYDROGENASE [UBIQUINONE] IRON-SULFUR PROTEIN 7, MITOCHONDRIAL"/>
    <property type="match status" value="1"/>
</dbReference>
<dbReference type="Pfam" id="PF01058">
    <property type="entry name" value="Oxidored_q6"/>
    <property type="match status" value="1"/>
</dbReference>
<dbReference type="SUPFAM" id="SSF56770">
    <property type="entry name" value="HydA/Nqo6-like"/>
    <property type="match status" value="1"/>
</dbReference>